<gene>
    <name evidence="1" type="primary">ydiB</name>
    <name type="ordered locus">EcolC_1939</name>
</gene>
<keyword id="KW-0028">Amino-acid biosynthesis</keyword>
<keyword id="KW-0057">Aromatic amino acid biosynthesis</keyword>
<keyword id="KW-0520">NAD</keyword>
<keyword id="KW-0521">NADP</keyword>
<keyword id="KW-0560">Oxidoreductase</keyword>
<accession>B1IQ64</accession>
<organism>
    <name type="scientific">Escherichia coli (strain ATCC 8739 / DSM 1576 / NBRC 3972 / NCIMB 8545 / WDCM 00012 / Crooks)</name>
    <dbReference type="NCBI Taxonomy" id="481805"/>
    <lineage>
        <taxon>Bacteria</taxon>
        <taxon>Pseudomonadati</taxon>
        <taxon>Pseudomonadota</taxon>
        <taxon>Gammaproteobacteria</taxon>
        <taxon>Enterobacterales</taxon>
        <taxon>Enterobacteriaceae</taxon>
        <taxon>Escherichia</taxon>
    </lineage>
</organism>
<feature type="chain" id="PRO_1000087929" description="Quinate/shikimate dehydrogenase">
    <location>
        <begin position="1"/>
        <end position="288"/>
    </location>
</feature>
<feature type="binding site" evidence="1">
    <location>
        <position position="71"/>
    </location>
    <ligand>
        <name>substrate</name>
    </ligand>
</feature>
<feature type="binding site" evidence="1">
    <location>
        <position position="107"/>
    </location>
    <ligand>
        <name>substrate</name>
    </ligand>
</feature>
<feature type="binding site" evidence="1">
    <location>
        <begin position="132"/>
        <end position="135"/>
    </location>
    <ligand>
        <name>NAD(+)</name>
        <dbReference type="ChEBI" id="CHEBI:57540"/>
    </ligand>
</feature>
<feature type="binding site" evidence="1">
    <location>
        <begin position="155"/>
        <end position="158"/>
    </location>
    <ligand>
        <name>NAD(+)</name>
        <dbReference type="ChEBI" id="CHEBI:57540"/>
    </ligand>
</feature>
<feature type="binding site" evidence="1">
    <location>
        <position position="205"/>
    </location>
    <ligand>
        <name>NAD(+)</name>
        <dbReference type="ChEBI" id="CHEBI:57540"/>
    </ligand>
</feature>
<feature type="binding site" evidence="1">
    <location>
        <begin position="232"/>
        <end position="235"/>
    </location>
    <ligand>
        <name>NAD(+)</name>
        <dbReference type="ChEBI" id="CHEBI:57540"/>
    </ligand>
</feature>
<feature type="binding site" evidence="1">
    <location>
        <position position="255"/>
    </location>
    <ligand>
        <name>NAD(+)</name>
        <dbReference type="ChEBI" id="CHEBI:57540"/>
    </ligand>
</feature>
<evidence type="ECO:0000255" key="1">
    <source>
        <dbReference type="HAMAP-Rule" id="MF_01578"/>
    </source>
</evidence>
<proteinExistence type="inferred from homology"/>
<protein>
    <recommendedName>
        <fullName evidence="1">Quinate/shikimate dehydrogenase</fullName>
        <ecNumber evidence="1">1.1.1.282</ecNumber>
    </recommendedName>
    <alternativeName>
        <fullName evidence="1">NAD-dependent shikimate 5-dehydrogenase</fullName>
    </alternativeName>
</protein>
<name>YDIB_ECOLC</name>
<comment type="function">
    <text evidence="1">The actual biological function of YdiB remains unclear, nor is it known whether 3-dehydroshikimate or quinate represents the natural substrate. Catalyzes the reversible NAD-dependent reduction of both 3-dehydroshikimate (DHSA) and 3-dehydroquinate to yield shikimate (SA) and quinate, respectively. It can use both NAD or NADP for catalysis, however it has higher catalytic efficiency with NAD.</text>
</comment>
<comment type="catalytic activity">
    <reaction evidence="1">
        <text>L-quinate + NAD(+) = 3-dehydroquinate + NADH + H(+)</text>
        <dbReference type="Rhea" id="RHEA:22364"/>
        <dbReference type="ChEBI" id="CHEBI:15378"/>
        <dbReference type="ChEBI" id="CHEBI:29751"/>
        <dbReference type="ChEBI" id="CHEBI:32364"/>
        <dbReference type="ChEBI" id="CHEBI:57540"/>
        <dbReference type="ChEBI" id="CHEBI:57945"/>
        <dbReference type="EC" id="1.1.1.282"/>
    </reaction>
</comment>
<comment type="catalytic activity">
    <reaction evidence="1">
        <text>L-quinate + NADP(+) = 3-dehydroquinate + NADPH + H(+)</text>
        <dbReference type="Rhea" id="RHEA:18425"/>
        <dbReference type="ChEBI" id="CHEBI:15378"/>
        <dbReference type="ChEBI" id="CHEBI:29751"/>
        <dbReference type="ChEBI" id="CHEBI:32364"/>
        <dbReference type="ChEBI" id="CHEBI:57783"/>
        <dbReference type="ChEBI" id="CHEBI:58349"/>
        <dbReference type="EC" id="1.1.1.282"/>
    </reaction>
</comment>
<comment type="catalytic activity">
    <reaction evidence="1">
        <text>shikimate + NADP(+) = 3-dehydroshikimate + NADPH + H(+)</text>
        <dbReference type="Rhea" id="RHEA:17737"/>
        <dbReference type="ChEBI" id="CHEBI:15378"/>
        <dbReference type="ChEBI" id="CHEBI:16630"/>
        <dbReference type="ChEBI" id="CHEBI:36208"/>
        <dbReference type="ChEBI" id="CHEBI:57783"/>
        <dbReference type="ChEBI" id="CHEBI:58349"/>
        <dbReference type="EC" id="1.1.1.282"/>
    </reaction>
</comment>
<comment type="catalytic activity">
    <reaction evidence="1">
        <text>shikimate + NAD(+) = 3-dehydroshikimate + NADH + H(+)</text>
        <dbReference type="Rhea" id="RHEA:17741"/>
        <dbReference type="ChEBI" id="CHEBI:15378"/>
        <dbReference type="ChEBI" id="CHEBI:16630"/>
        <dbReference type="ChEBI" id="CHEBI:36208"/>
        <dbReference type="ChEBI" id="CHEBI:57540"/>
        <dbReference type="ChEBI" id="CHEBI:57945"/>
        <dbReference type="EC" id="1.1.1.282"/>
    </reaction>
</comment>
<comment type="pathway">
    <text evidence="1">Metabolic intermediate biosynthesis; chorismate biosynthesis; chorismate from D-erythrose 4-phosphate and phosphoenolpyruvate: step 4/7.</text>
</comment>
<comment type="subunit">
    <text evidence="1">Homodimer.</text>
</comment>
<comment type="similarity">
    <text evidence="1">Belongs to the shikimate dehydrogenase family.</text>
</comment>
<sequence>MDVTAKYELIGLMAYPIRHSLSPEMQNKALEKAGLPFTYMAFEVDNDSFPGAIEGLKALKMRGTGVSMPNKQLACEYVDELTPAAKLVGAINTIVNDDGYLRGYNTDGTGHIRAIKESGFDIKGKTMVLLGAGGASTAIGAQGAIEGLKEIKLFNRRDEFFDKALAFAQRVNENTDCVVTVTDLADQQAFAEALASADILTNGTKVGMKPLENESLVNDISLLHPGLLVTECVYNPHMTKLLQQAQQAGCKTIDGYGMLLWQGAEQFTLWTGKDFPLEYVKQVMGFGA</sequence>
<dbReference type="EC" id="1.1.1.282" evidence="1"/>
<dbReference type="EMBL" id="CP000946">
    <property type="protein sequence ID" value="ACA77585.1"/>
    <property type="molecule type" value="Genomic_DNA"/>
</dbReference>
<dbReference type="RefSeq" id="WP_000383469.1">
    <property type="nucleotide sequence ID" value="NZ_MTFT01000006.1"/>
</dbReference>
<dbReference type="SMR" id="B1IQ64"/>
<dbReference type="GeneID" id="75171755"/>
<dbReference type="KEGG" id="ecl:EcolC_1939"/>
<dbReference type="HOGENOM" id="CLU_044063_4_4_6"/>
<dbReference type="UniPathway" id="UPA00053">
    <property type="reaction ID" value="UER00087"/>
</dbReference>
<dbReference type="GO" id="GO:0030266">
    <property type="term" value="F:quinate 3-dehydrogenase (NAD+) activity"/>
    <property type="evidence" value="ECO:0007669"/>
    <property type="project" value="UniProtKB-UniRule"/>
</dbReference>
<dbReference type="GO" id="GO:0052733">
    <property type="term" value="F:quinate 3-dehydrogenase (NADP+) activity"/>
    <property type="evidence" value="ECO:0007669"/>
    <property type="project" value="InterPro"/>
</dbReference>
<dbReference type="GO" id="GO:0052734">
    <property type="term" value="F:shikimate 3-dehydrogenase (NAD+) activity"/>
    <property type="evidence" value="ECO:0007669"/>
    <property type="project" value="InterPro"/>
</dbReference>
<dbReference type="GO" id="GO:0004764">
    <property type="term" value="F:shikimate 3-dehydrogenase (NADP+) activity"/>
    <property type="evidence" value="ECO:0007669"/>
    <property type="project" value="UniProtKB-UniRule"/>
</dbReference>
<dbReference type="GO" id="GO:0008652">
    <property type="term" value="P:amino acid biosynthetic process"/>
    <property type="evidence" value="ECO:0007669"/>
    <property type="project" value="UniProtKB-KW"/>
</dbReference>
<dbReference type="GO" id="GO:0009073">
    <property type="term" value="P:aromatic amino acid family biosynthetic process"/>
    <property type="evidence" value="ECO:0007669"/>
    <property type="project" value="UniProtKB-KW"/>
</dbReference>
<dbReference type="GO" id="GO:0009423">
    <property type="term" value="P:chorismate biosynthetic process"/>
    <property type="evidence" value="ECO:0007669"/>
    <property type="project" value="UniProtKB-UniRule"/>
</dbReference>
<dbReference type="GO" id="GO:0019632">
    <property type="term" value="P:shikimate metabolic process"/>
    <property type="evidence" value="ECO:0007669"/>
    <property type="project" value="TreeGrafter"/>
</dbReference>
<dbReference type="CDD" id="cd01065">
    <property type="entry name" value="NAD_bind_Shikimate_DH"/>
    <property type="match status" value="1"/>
</dbReference>
<dbReference type="FunFam" id="3.40.50.10860:FF:000004">
    <property type="entry name" value="Quinate/shikimate dehydrogenase"/>
    <property type="match status" value="1"/>
</dbReference>
<dbReference type="FunFam" id="3.40.50.720:FF:000086">
    <property type="entry name" value="Quinate/shikimate dehydrogenase"/>
    <property type="match status" value="1"/>
</dbReference>
<dbReference type="Gene3D" id="3.40.50.10860">
    <property type="entry name" value="Leucine Dehydrogenase, chain A, domain 1"/>
    <property type="match status" value="1"/>
</dbReference>
<dbReference type="Gene3D" id="3.40.50.720">
    <property type="entry name" value="NAD(P)-binding Rossmann-like Domain"/>
    <property type="match status" value="1"/>
</dbReference>
<dbReference type="HAMAP" id="MF_00222">
    <property type="entry name" value="Shikimate_DH_AroE"/>
    <property type="match status" value="1"/>
</dbReference>
<dbReference type="HAMAP" id="MF_01578">
    <property type="entry name" value="Shikimate_DH_YdiB"/>
    <property type="match status" value="1"/>
</dbReference>
<dbReference type="InterPro" id="IPR046346">
    <property type="entry name" value="Aminoacid_DH-like_N_sf"/>
</dbReference>
<dbReference type="InterPro" id="IPR036291">
    <property type="entry name" value="NAD(P)-bd_dom_sf"/>
</dbReference>
<dbReference type="InterPro" id="IPR022872">
    <property type="entry name" value="Quinate/Shikimate_DH"/>
</dbReference>
<dbReference type="InterPro" id="IPR041121">
    <property type="entry name" value="SDH_C"/>
</dbReference>
<dbReference type="InterPro" id="IPR013708">
    <property type="entry name" value="Shikimate_DH-bd_N"/>
</dbReference>
<dbReference type="InterPro" id="IPR022893">
    <property type="entry name" value="Shikimate_DH_fam"/>
</dbReference>
<dbReference type="NCBIfam" id="NF009390">
    <property type="entry name" value="PRK12749.1"/>
    <property type="match status" value="1"/>
</dbReference>
<dbReference type="PANTHER" id="PTHR21089:SF1">
    <property type="entry name" value="BIFUNCTIONAL 3-DEHYDROQUINATE DEHYDRATASE_SHIKIMATE DEHYDROGENASE, CHLOROPLASTIC"/>
    <property type="match status" value="1"/>
</dbReference>
<dbReference type="PANTHER" id="PTHR21089">
    <property type="entry name" value="SHIKIMATE DEHYDROGENASE"/>
    <property type="match status" value="1"/>
</dbReference>
<dbReference type="Pfam" id="PF18317">
    <property type="entry name" value="SDH_C"/>
    <property type="match status" value="1"/>
</dbReference>
<dbReference type="Pfam" id="PF08501">
    <property type="entry name" value="Shikimate_dh_N"/>
    <property type="match status" value="1"/>
</dbReference>
<dbReference type="SUPFAM" id="SSF53223">
    <property type="entry name" value="Aminoacid dehydrogenase-like, N-terminal domain"/>
    <property type="match status" value="1"/>
</dbReference>
<dbReference type="SUPFAM" id="SSF51735">
    <property type="entry name" value="NAD(P)-binding Rossmann-fold domains"/>
    <property type="match status" value="1"/>
</dbReference>
<reference key="1">
    <citation type="submission" date="2008-02" db="EMBL/GenBank/DDBJ databases">
        <title>Complete sequence of Escherichia coli C str. ATCC 8739.</title>
        <authorList>
            <person name="Copeland A."/>
            <person name="Lucas S."/>
            <person name="Lapidus A."/>
            <person name="Glavina del Rio T."/>
            <person name="Dalin E."/>
            <person name="Tice H."/>
            <person name="Bruce D."/>
            <person name="Goodwin L."/>
            <person name="Pitluck S."/>
            <person name="Kiss H."/>
            <person name="Brettin T."/>
            <person name="Detter J.C."/>
            <person name="Han C."/>
            <person name="Kuske C.R."/>
            <person name="Schmutz J."/>
            <person name="Larimer F."/>
            <person name="Land M."/>
            <person name="Hauser L."/>
            <person name="Kyrpides N."/>
            <person name="Mikhailova N."/>
            <person name="Ingram L."/>
            <person name="Richardson P."/>
        </authorList>
    </citation>
    <scope>NUCLEOTIDE SEQUENCE [LARGE SCALE GENOMIC DNA]</scope>
    <source>
        <strain>ATCC 8739 / DSM 1576 / NBRC 3972 / NCIMB 8545 / WDCM 00012 / Crooks</strain>
    </source>
</reference>